<accession>Q48DG3</accession>
<dbReference type="EC" id="2.1.1.195" evidence="1"/>
<dbReference type="EMBL" id="CP000058">
    <property type="protein sequence ID" value="AAZ35564.1"/>
    <property type="molecule type" value="Genomic_DNA"/>
</dbReference>
<dbReference type="RefSeq" id="WP_004655757.1">
    <property type="nucleotide sequence ID" value="NC_005773.3"/>
</dbReference>
<dbReference type="SMR" id="Q48DG3"/>
<dbReference type="KEGG" id="psp:PSPPH_4462"/>
<dbReference type="eggNOG" id="COG1903">
    <property type="taxonomic scope" value="Bacteria"/>
</dbReference>
<dbReference type="HOGENOM" id="CLU_041273_0_0_6"/>
<dbReference type="UniPathway" id="UPA00148">
    <property type="reaction ID" value="UER00227"/>
</dbReference>
<dbReference type="Proteomes" id="UP000000551">
    <property type="component" value="Chromosome"/>
</dbReference>
<dbReference type="GO" id="GO:0043780">
    <property type="term" value="F:cobalt-precorrin-5B C1-methyltransferase activity"/>
    <property type="evidence" value="ECO:0007669"/>
    <property type="project" value="RHEA"/>
</dbReference>
<dbReference type="GO" id="GO:0019251">
    <property type="term" value="P:anaerobic cobalamin biosynthetic process"/>
    <property type="evidence" value="ECO:0007669"/>
    <property type="project" value="UniProtKB-UniRule"/>
</dbReference>
<dbReference type="GO" id="GO:0032259">
    <property type="term" value="P:methylation"/>
    <property type="evidence" value="ECO:0007669"/>
    <property type="project" value="UniProtKB-KW"/>
</dbReference>
<dbReference type="Gene3D" id="3.30.2110.10">
    <property type="entry name" value="CbiD-like"/>
    <property type="match status" value="1"/>
</dbReference>
<dbReference type="HAMAP" id="MF_00787">
    <property type="entry name" value="CbiD"/>
    <property type="match status" value="1"/>
</dbReference>
<dbReference type="InterPro" id="IPR002748">
    <property type="entry name" value="CbiD"/>
</dbReference>
<dbReference type="InterPro" id="IPR036074">
    <property type="entry name" value="CbiD_sf"/>
</dbReference>
<dbReference type="NCBIfam" id="TIGR00312">
    <property type="entry name" value="cbiD"/>
    <property type="match status" value="1"/>
</dbReference>
<dbReference type="NCBIfam" id="NF000849">
    <property type="entry name" value="PRK00075.1-1"/>
    <property type="match status" value="1"/>
</dbReference>
<dbReference type="PANTHER" id="PTHR35863">
    <property type="entry name" value="COBALT-PRECORRIN-5B C(1)-METHYLTRANSFERASE"/>
    <property type="match status" value="1"/>
</dbReference>
<dbReference type="PANTHER" id="PTHR35863:SF1">
    <property type="entry name" value="COBALT-PRECORRIN-5B C(1)-METHYLTRANSFERASE"/>
    <property type="match status" value="1"/>
</dbReference>
<dbReference type="Pfam" id="PF01888">
    <property type="entry name" value="CbiD"/>
    <property type="match status" value="1"/>
</dbReference>
<dbReference type="PIRSF" id="PIRSF026782">
    <property type="entry name" value="CbiD"/>
    <property type="match status" value="1"/>
</dbReference>
<dbReference type="SUPFAM" id="SSF111342">
    <property type="entry name" value="CbiD-like"/>
    <property type="match status" value="1"/>
</dbReference>
<sequence length="370" mass="38787">MREETAEQPAPLRSGLTTGSCATATSLAAARLLLSGQISDAVEIVLPKGKQVQMRLEFCRLVDNFAEAGTLKDAGDDPDVTHGALVFARVRLEMAPGVRFVAGAGVGSVTRPGLVLAVGEPAINPVPRRMMTEHLLQLAEELGYSGGFEVTIGVEGGEALALKTMNPRLGILGGLSILGTSGIVRPFSCAAYIASIHQGIDVATTNGYRHIAACTGNASEDTMRRVYNIPDIALIEMGDFVGAVLKHLRKVPVDKLSLCGGFGKISKLAAGHMDLHSRHSSIDLPQLALWAADTGADADLQQRIRDANTSQQALAMCATAGVPLGDEVCRHALAFARSVVPAQVQVEVFAIDRQGGIVGQAGVALSKEHT</sequence>
<keyword id="KW-0169">Cobalamin biosynthesis</keyword>
<keyword id="KW-0489">Methyltransferase</keyword>
<keyword id="KW-0949">S-adenosyl-L-methionine</keyword>
<keyword id="KW-0808">Transferase</keyword>
<reference key="1">
    <citation type="journal article" date="2005" name="J. Bacteriol.">
        <title>Whole-genome sequence analysis of Pseudomonas syringae pv. phaseolicola 1448A reveals divergence among pathovars in genes involved in virulence and transposition.</title>
        <authorList>
            <person name="Joardar V."/>
            <person name="Lindeberg M."/>
            <person name="Jackson R.W."/>
            <person name="Selengut J."/>
            <person name="Dodson R."/>
            <person name="Brinkac L.M."/>
            <person name="Daugherty S.C."/>
            <person name="DeBoy R.T."/>
            <person name="Durkin A.S."/>
            <person name="Gwinn Giglio M."/>
            <person name="Madupu R."/>
            <person name="Nelson W.C."/>
            <person name="Rosovitz M.J."/>
            <person name="Sullivan S.A."/>
            <person name="Crabtree J."/>
            <person name="Creasy T."/>
            <person name="Davidsen T.M."/>
            <person name="Haft D.H."/>
            <person name="Zafar N."/>
            <person name="Zhou L."/>
            <person name="Halpin R."/>
            <person name="Holley T."/>
            <person name="Khouri H.M."/>
            <person name="Feldblyum T.V."/>
            <person name="White O."/>
            <person name="Fraser C.M."/>
            <person name="Chatterjee A.K."/>
            <person name="Cartinhour S."/>
            <person name="Schneider D."/>
            <person name="Mansfield J.W."/>
            <person name="Collmer A."/>
            <person name="Buell R."/>
        </authorList>
    </citation>
    <scope>NUCLEOTIDE SEQUENCE [LARGE SCALE GENOMIC DNA]</scope>
    <source>
        <strain>1448A / Race 6</strain>
    </source>
</reference>
<protein>
    <recommendedName>
        <fullName evidence="1">Cobalt-precorrin-5B C(1)-methyltransferase</fullName>
        <ecNumber evidence="1">2.1.1.195</ecNumber>
    </recommendedName>
    <alternativeName>
        <fullName evidence="1">Cobalt-precorrin-6A synthase</fullName>
    </alternativeName>
</protein>
<evidence type="ECO:0000255" key="1">
    <source>
        <dbReference type="HAMAP-Rule" id="MF_00787"/>
    </source>
</evidence>
<feature type="chain" id="PRO_0000257774" description="Cobalt-precorrin-5B C(1)-methyltransferase">
    <location>
        <begin position="1"/>
        <end position="370"/>
    </location>
</feature>
<comment type="function">
    <text evidence="1">Catalyzes the methylation of C-1 in cobalt-precorrin-5B to form cobalt-precorrin-6A.</text>
</comment>
<comment type="catalytic activity">
    <reaction evidence="1">
        <text>Co-precorrin-5B + S-adenosyl-L-methionine = Co-precorrin-6A + S-adenosyl-L-homocysteine</text>
        <dbReference type="Rhea" id="RHEA:26285"/>
        <dbReference type="ChEBI" id="CHEBI:57856"/>
        <dbReference type="ChEBI" id="CHEBI:59789"/>
        <dbReference type="ChEBI" id="CHEBI:60063"/>
        <dbReference type="ChEBI" id="CHEBI:60064"/>
        <dbReference type="EC" id="2.1.1.195"/>
    </reaction>
</comment>
<comment type="pathway">
    <text evidence="1">Cofactor biosynthesis; adenosylcobalamin biosynthesis; cob(II)yrinate a,c-diamide from sirohydrochlorin (anaerobic route): step 6/10.</text>
</comment>
<comment type="similarity">
    <text evidence="1">Belongs to the CbiD family.</text>
</comment>
<proteinExistence type="inferred from homology"/>
<name>CBID_PSE14</name>
<organism>
    <name type="scientific">Pseudomonas savastanoi pv. phaseolicola (strain 1448A / Race 6)</name>
    <name type="common">Pseudomonas syringae pv. phaseolicola (strain 1448A / Race 6)</name>
    <dbReference type="NCBI Taxonomy" id="264730"/>
    <lineage>
        <taxon>Bacteria</taxon>
        <taxon>Pseudomonadati</taxon>
        <taxon>Pseudomonadota</taxon>
        <taxon>Gammaproteobacteria</taxon>
        <taxon>Pseudomonadales</taxon>
        <taxon>Pseudomonadaceae</taxon>
        <taxon>Pseudomonas</taxon>
    </lineage>
</organism>
<gene>
    <name evidence="1" type="primary">cbiD</name>
    <name type="ordered locus">PSPPH_4462</name>
</gene>